<protein>
    <recommendedName>
        <fullName>Secretoglobin family 3A member 2</fullName>
    </recommendedName>
    <alternativeName>
        <fullName>Pneumo secretory protein 1</fullName>
        <shortName>PnSP-1</shortName>
    </alternativeName>
    <alternativeName>
        <fullName>Uteroglobin-related protein 1</fullName>
    </alternativeName>
</protein>
<organism>
    <name type="scientific">Mus musculus</name>
    <name type="common">Mouse</name>
    <dbReference type="NCBI Taxonomy" id="10090"/>
    <lineage>
        <taxon>Eukaryota</taxon>
        <taxon>Metazoa</taxon>
        <taxon>Chordata</taxon>
        <taxon>Craniata</taxon>
        <taxon>Vertebrata</taxon>
        <taxon>Euteleostomi</taxon>
        <taxon>Mammalia</taxon>
        <taxon>Eutheria</taxon>
        <taxon>Euarchontoglires</taxon>
        <taxon>Glires</taxon>
        <taxon>Rodentia</taxon>
        <taxon>Myomorpha</taxon>
        <taxon>Muroidea</taxon>
        <taxon>Muridae</taxon>
        <taxon>Murinae</taxon>
        <taxon>Mus</taxon>
        <taxon>Mus</taxon>
    </lineage>
</organism>
<dbReference type="EMBL" id="AF274959">
    <property type="protein sequence ID" value="AAL25708.1"/>
    <property type="molecule type" value="mRNA"/>
</dbReference>
<dbReference type="EMBL" id="AF274960">
    <property type="protein sequence ID" value="AAL25709.1"/>
    <property type="molecule type" value="mRNA"/>
</dbReference>
<dbReference type="EMBL" id="AF274961">
    <property type="protein sequence ID" value="AAL25710.1"/>
    <property type="molecule type" value="mRNA"/>
</dbReference>
<dbReference type="EMBL" id="AF439546">
    <property type="protein sequence ID" value="AAQ04561.1"/>
    <property type="molecule type" value="mRNA"/>
</dbReference>
<dbReference type="EMBL" id="AK136373">
    <property type="protein sequence ID" value="BAE22952.1"/>
    <property type="molecule type" value="mRNA"/>
</dbReference>
<dbReference type="EMBL" id="AK136396">
    <property type="protein sequence ID" value="BAE22961.1"/>
    <property type="molecule type" value="mRNA"/>
</dbReference>
<dbReference type="EMBL" id="CH466528">
    <property type="protein sequence ID" value="EDL10011.1"/>
    <property type="molecule type" value="Genomic_DNA"/>
</dbReference>
<dbReference type="EMBL" id="BC061046">
    <property type="protein sequence ID" value="AAH61046.1"/>
    <property type="molecule type" value="mRNA"/>
</dbReference>
<dbReference type="CCDS" id="CCDS79640.1">
    <molecule id="Q920H1-2"/>
</dbReference>
<dbReference type="CCDS" id="CCDS79641.1">
    <molecule id="Q920H1-3"/>
</dbReference>
<dbReference type="RefSeq" id="NP_001276572.1">
    <molecule id="Q920H1-3"/>
    <property type="nucleotide sequence ID" value="NM_001289643.1"/>
</dbReference>
<dbReference type="RefSeq" id="NP_001276573.1">
    <molecule id="Q920H1-2"/>
    <property type="nucleotide sequence ID" value="NM_001289644.1"/>
</dbReference>
<dbReference type="RefSeq" id="XP_011245113.1">
    <property type="nucleotide sequence ID" value="XM_011246811.1"/>
</dbReference>
<dbReference type="RefSeq" id="XP_036016835.1">
    <molecule id="Q920H1-1"/>
    <property type="nucleotide sequence ID" value="XM_036160942.1"/>
</dbReference>
<dbReference type="SMR" id="Q920H1"/>
<dbReference type="BioGRID" id="228174">
    <property type="interactions" value="1"/>
</dbReference>
<dbReference type="FunCoup" id="Q920H1">
    <property type="interactions" value="310"/>
</dbReference>
<dbReference type="STRING" id="10090.ENSMUSP00000140375"/>
<dbReference type="PhosphoSitePlus" id="Q920H1"/>
<dbReference type="PaxDb" id="10090-ENSMUSP00000038872"/>
<dbReference type="ProteomicsDB" id="261331">
    <molecule id="Q920H1-2"/>
</dbReference>
<dbReference type="ProteomicsDB" id="261332">
    <molecule id="Q920H1-3"/>
</dbReference>
<dbReference type="ProteomicsDB" id="261333">
    <molecule id="Q920H1-1"/>
</dbReference>
<dbReference type="Antibodypedia" id="27663">
    <property type="antibodies" value="47 antibodies from 16 providers"/>
</dbReference>
<dbReference type="Ensembl" id="ENSMUST00000043803.13">
    <molecule id="Q920H1-1"/>
    <property type="protein sequence ID" value="ENSMUSP00000038872.7"/>
    <property type="gene ID" value="ENSMUSG00000038791.15"/>
</dbReference>
<dbReference type="Ensembl" id="ENSMUST00000187157.7">
    <molecule id="Q920H1-2"/>
    <property type="protein sequence ID" value="ENSMUSP00000140476.2"/>
    <property type="gene ID" value="ENSMUSG00000038791.15"/>
</dbReference>
<dbReference type="Ensembl" id="ENSMUST00000189750.2">
    <molecule id="Q920H1-3"/>
    <property type="protein sequence ID" value="ENSMUSP00000140375.2"/>
    <property type="gene ID" value="ENSMUSG00000038791.15"/>
</dbReference>
<dbReference type="GeneID" id="117158"/>
<dbReference type="KEGG" id="mmu:117158"/>
<dbReference type="UCSC" id="uc008eum.2">
    <molecule id="Q920H1-2"/>
    <property type="organism name" value="mouse"/>
</dbReference>
<dbReference type="UCSC" id="uc008eun.2">
    <property type="organism name" value="mouse"/>
</dbReference>
<dbReference type="UCSC" id="uc012bck.2">
    <molecule id="Q920H1-3"/>
    <property type="organism name" value="mouse"/>
</dbReference>
<dbReference type="AGR" id="MGI:2153470"/>
<dbReference type="CTD" id="117156"/>
<dbReference type="MGI" id="MGI:2153470">
    <property type="gene designation" value="Scgb3a2"/>
</dbReference>
<dbReference type="VEuPathDB" id="HostDB:ENSMUSG00000038791"/>
<dbReference type="eggNOG" id="ENOG502SVJM">
    <property type="taxonomic scope" value="Eukaryota"/>
</dbReference>
<dbReference type="GeneTree" id="ENSGT00420000029848"/>
<dbReference type="HOGENOM" id="CLU_146812_0_0_1"/>
<dbReference type="InParanoid" id="Q920H1"/>
<dbReference type="OMA" id="ISICTYS"/>
<dbReference type="PhylomeDB" id="Q920H1"/>
<dbReference type="TreeFam" id="TF336928"/>
<dbReference type="Reactome" id="R-MMU-3000480">
    <property type="pathway name" value="Scavenging by Class A Receptors"/>
</dbReference>
<dbReference type="BioGRID-ORCS" id="117158">
    <property type="hits" value="1 hit in 75 CRISPR screens"/>
</dbReference>
<dbReference type="ChiTaRS" id="Scgb3a2">
    <property type="organism name" value="mouse"/>
</dbReference>
<dbReference type="PRO" id="PR:Q920H1"/>
<dbReference type="Proteomes" id="UP000000589">
    <property type="component" value="Chromosome 18"/>
</dbReference>
<dbReference type="RNAct" id="Q920H1">
    <property type="molecule type" value="protein"/>
</dbReference>
<dbReference type="Bgee" id="ENSMUSG00000038791">
    <property type="expression patterns" value="Expressed in right lung lobe and 44 other cell types or tissues"/>
</dbReference>
<dbReference type="GO" id="GO:0005576">
    <property type="term" value="C:extracellular region"/>
    <property type="evidence" value="ECO:0000314"/>
    <property type="project" value="MGI"/>
</dbReference>
<dbReference type="GO" id="GO:0005615">
    <property type="term" value="C:extracellular space"/>
    <property type="evidence" value="ECO:0007669"/>
    <property type="project" value="InterPro"/>
</dbReference>
<dbReference type="InterPro" id="IPR040301">
    <property type="entry name" value="Secretoglobin_3A"/>
</dbReference>
<dbReference type="PANTHER" id="PTHR34829">
    <property type="entry name" value="SECRETOGLOBIN FAMILY 3A MEMBER 2"/>
    <property type="match status" value="1"/>
</dbReference>
<dbReference type="PANTHER" id="PTHR34829:SF2">
    <property type="entry name" value="SECRETOGLOBIN FAMILY 3A MEMBER 2"/>
    <property type="match status" value="1"/>
</dbReference>
<dbReference type="Pfam" id="PF20490">
    <property type="entry name" value="SCGB3A"/>
    <property type="match status" value="1"/>
</dbReference>
<reference key="1">
    <citation type="journal article" date="2001" name="Mol. Endocrinol.">
        <title>UGRP1, a uteroglobin/Clara cell secretory protein-related protein, is a novel lung-enriched downstream target gene for the T/EBP/NKX2.1 homeodomain transcription factor.</title>
        <authorList>
            <person name="Niimi T."/>
            <person name="Keck-Waggoner C.L."/>
            <person name="Popescu N.C."/>
            <person name="Zhou Y."/>
            <person name="Levitt R.C."/>
            <person name="Kimura S."/>
        </authorList>
    </citation>
    <scope>NUCLEOTIDE SEQUENCE [MRNA] (ISOFORMS A; B AND C)</scope>
    <scope>SUBUNIT</scope>
    <scope>SUBCELLULAR LOCATION</scope>
    <scope>TISSUE SPECIFICITY</scope>
    <scope>DEVELOPMENTAL STAGE</scope>
    <source>
        <tissue>Lung</tissue>
    </source>
</reference>
<reference key="2">
    <citation type="submission" date="2001-10" db="EMBL/GenBank/DDBJ databases">
        <title>Molecular cloning of PnSP-1, a protein of the respiratory tract with potential association to atopy.</title>
        <authorList>
            <person name="Clippe A."/>
            <person name="Laing I.A."/>
            <person name="LeSouef P.N."/>
            <person name="Bernard A."/>
            <person name="Knoops B."/>
        </authorList>
    </citation>
    <scope>NUCLEOTIDE SEQUENCE [MRNA] (ISOFORM A)</scope>
    <source>
        <strain>NMRI</strain>
    </source>
</reference>
<reference key="3">
    <citation type="journal article" date="2005" name="Science">
        <title>The transcriptional landscape of the mammalian genome.</title>
        <authorList>
            <person name="Carninci P."/>
            <person name="Kasukawa T."/>
            <person name="Katayama S."/>
            <person name="Gough J."/>
            <person name="Frith M.C."/>
            <person name="Maeda N."/>
            <person name="Oyama R."/>
            <person name="Ravasi T."/>
            <person name="Lenhard B."/>
            <person name="Wells C."/>
            <person name="Kodzius R."/>
            <person name="Shimokawa K."/>
            <person name="Bajic V.B."/>
            <person name="Brenner S.E."/>
            <person name="Batalov S."/>
            <person name="Forrest A.R."/>
            <person name="Zavolan M."/>
            <person name="Davis M.J."/>
            <person name="Wilming L.G."/>
            <person name="Aidinis V."/>
            <person name="Allen J.E."/>
            <person name="Ambesi-Impiombato A."/>
            <person name="Apweiler R."/>
            <person name="Aturaliya R.N."/>
            <person name="Bailey T.L."/>
            <person name="Bansal M."/>
            <person name="Baxter L."/>
            <person name="Beisel K.W."/>
            <person name="Bersano T."/>
            <person name="Bono H."/>
            <person name="Chalk A.M."/>
            <person name="Chiu K.P."/>
            <person name="Choudhary V."/>
            <person name="Christoffels A."/>
            <person name="Clutterbuck D.R."/>
            <person name="Crowe M.L."/>
            <person name="Dalla E."/>
            <person name="Dalrymple B.P."/>
            <person name="de Bono B."/>
            <person name="Della Gatta G."/>
            <person name="di Bernardo D."/>
            <person name="Down T."/>
            <person name="Engstrom P."/>
            <person name="Fagiolini M."/>
            <person name="Faulkner G."/>
            <person name="Fletcher C.F."/>
            <person name="Fukushima T."/>
            <person name="Furuno M."/>
            <person name="Futaki S."/>
            <person name="Gariboldi M."/>
            <person name="Georgii-Hemming P."/>
            <person name="Gingeras T.R."/>
            <person name="Gojobori T."/>
            <person name="Green R.E."/>
            <person name="Gustincich S."/>
            <person name="Harbers M."/>
            <person name="Hayashi Y."/>
            <person name="Hensch T.K."/>
            <person name="Hirokawa N."/>
            <person name="Hill D."/>
            <person name="Huminiecki L."/>
            <person name="Iacono M."/>
            <person name="Ikeo K."/>
            <person name="Iwama A."/>
            <person name="Ishikawa T."/>
            <person name="Jakt M."/>
            <person name="Kanapin A."/>
            <person name="Katoh M."/>
            <person name="Kawasawa Y."/>
            <person name="Kelso J."/>
            <person name="Kitamura H."/>
            <person name="Kitano H."/>
            <person name="Kollias G."/>
            <person name="Krishnan S.P."/>
            <person name="Kruger A."/>
            <person name="Kummerfeld S.K."/>
            <person name="Kurochkin I.V."/>
            <person name="Lareau L.F."/>
            <person name="Lazarevic D."/>
            <person name="Lipovich L."/>
            <person name="Liu J."/>
            <person name="Liuni S."/>
            <person name="McWilliam S."/>
            <person name="Madan Babu M."/>
            <person name="Madera M."/>
            <person name="Marchionni L."/>
            <person name="Matsuda H."/>
            <person name="Matsuzawa S."/>
            <person name="Miki H."/>
            <person name="Mignone F."/>
            <person name="Miyake S."/>
            <person name="Morris K."/>
            <person name="Mottagui-Tabar S."/>
            <person name="Mulder N."/>
            <person name="Nakano N."/>
            <person name="Nakauchi H."/>
            <person name="Ng P."/>
            <person name="Nilsson R."/>
            <person name="Nishiguchi S."/>
            <person name="Nishikawa S."/>
            <person name="Nori F."/>
            <person name="Ohara O."/>
            <person name="Okazaki Y."/>
            <person name="Orlando V."/>
            <person name="Pang K.C."/>
            <person name="Pavan W.J."/>
            <person name="Pavesi G."/>
            <person name="Pesole G."/>
            <person name="Petrovsky N."/>
            <person name="Piazza S."/>
            <person name="Reed J."/>
            <person name="Reid J.F."/>
            <person name="Ring B.Z."/>
            <person name="Ringwald M."/>
            <person name="Rost B."/>
            <person name="Ruan Y."/>
            <person name="Salzberg S.L."/>
            <person name="Sandelin A."/>
            <person name="Schneider C."/>
            <person name="Schoenbach C."/>
            <person name="Sekiguchi K."/>
            <person name="Semple C.A."/>
            <person name="Seno S."/>
            <person name="Sessa L."/>
            <person name="Sheng Y."/>
            <person name="Shibata Y."/>
            <person name="Shimada H."/>
            <person name="Shimada K."/>
            <person name="Silva D."/>
            <person name="Sinclair B."/>
            <person name="Sperling S."/>
            <person name="Stupka E."/>
            <person name="Sugiura K."/>
            <person name="Sultana R."/>
            <person name="Takenaka Y."/>
            <person name="Taki K."/>
            <person name="Tammoja K."/>
            <person name="Tan S.L."/>
            <person name="Tang S."/>
            <person name="Taylor M.S."/>
            <person name="Tegner J."/>
            <person name="Teichmann S.A."/>
            <person name="Ueda H.R."/>
            <person name="van Nimwegen E."/>
            <person name="Verardo R."/>
            <person name="Wei C.L."/>
            <person name="Yagi K."/>
            <person name="Yamanishi H."/>
            <person name="Zabarovsky E."/>
            <person name="Zhu S."/>
            <person name="Zimmer A."/>
            <person name="Hide W."/>
            <person name="Bult C."/>
            <person name="Grimmond S.M."/>
            <person name="Teasdale R.D."/>
            <person name="Liu E.T."/>
            <person name="Brusic V."/>
            <person name="Quackenbush J."/>
            <person name="Wahlestedt C."/>
            <person name="Mattick J.S."/>
            <person name="Hume D.A."/>
            <person name="Kai C."/>
            <person name="Sasaki D."/>
            <person name="Tomaru Y."/>
            <person name="Fukuda S."/>
            <person name="Kanamori-Katayama M."/>
            <person name="Suzuki M."/>
            <person name="Aoki J."/>
            <person name="Arakawa T."/>
            <person name="Iida J."/>
            <person name="Imamura K."/>
            <person name="Itoh M."/>
            <person name="Kato T."/>
            <person name="Kawaji H."/>
            <person name="Kawagashira N."/>
            <person name="Kawashima T."/>
            <person name="Kojima M."/>
            <person name="Kondo S."/>
            <person name="Konno H."/>
            <person name="Nakano K."/>
            <person name="Ninomiya N."/>
            <person name="Nishio T."/>
            <person name="Okada M."/>
            <person name="Plessy C."/>
            <person name="Shibata K."/>
            <person name="Shiraki T."/>
            <person name="Suzuki S."/>
            <person name="Tagami M."/>
            <person name="Waki K."/>
            <person name="Watahiki A."/>
            <person name="Okamura-Oho Y."/>
            <person name="Suzuki H."/>
            <person name="Kawai J."/>
            <person name="Hayashizaki Y."/>
        </authorList>
    </citation>
    <scope>NUCLEOTIDE SEQUENCE [LARGE SCALE MRNA] (ISOFORM A)</scope>
    <source>
        <strain evidence="15">C57BL/6J</strain>
        <tissue evidence="15">Lung</tissue>
    </source>
</reference>
<reference key="4">
    <citation type="submission" date="2005-09" db="EMBL/GenBank/DDBJ databases">
        <authorList>
            <person name="Mural R.J."/>
            <person name="Adams M.D."/>
            <person name="Myers E.W."/>
            <person name="Smith H.O."/>
            <person name="Venter J.C."/>
        </authorList>
    </citation>
    <scope>NUCLEOTIDE SEQUENCE [LARGE SCALE GENOMIC DNA]</scope>
</reference>
<reference key="5">
    <citation type="journal article" date="2004" name="Genome Res.">
        <title>The status, quality, and expansion of the NIH full-length cDNA project: the Mammalian Gene Collection (MGC).</title>
        <authorList>
            <consortium name="The MGC Project Team"/>
        </authorList>
    </citation>
    <scope>NUCLEOTIDE SEQUENCE [LARGE SCALE MRNA] (ISOFORM A)</scope>
</reference>
<reference key="6">
    <citation type="journal article" date="2002" name="Am. J. Respir. Crit. Care Med.">
        <title>Secretoglobins SCGB3A1 and SCGB3A2 define secretory cell subsets in mouse and human airways.</title>
        <authorList>
            <person name="Reynolds S.D."/>
            <person name="Reynolds P.R."/>
            <person name="Pryhuber G.S."/>
            <person name="Finder J.D."/>
            <person name="Stripp B.R."/>
        </authorList>
    </citation>
    <scope>TISSUE SPECIFICITY</scope>
</reference>
<reference key="7">
    <citation type="journal article" date="2002" name="Mech. Dev.">
        <title>Expression of high in normal-1 (HIN-1) and uteroglobin related protein-1 (UGRP-1) in adult and developing tissues.</title>
        <authorList>
            <person name="Porter D."/>
            <person name="Lahti-Domenici J."/>
            <person name="Torres-Arzayus M."/>
            <person name="Chin L."/>
            <person name="Polyak K."/>
        </authorList>
    </citation>
    <scope>TISSUE SPECIFICITY</scope>
    <scope>DEVELOPMENTAL STAGE</scope>
</reference>
<reference key="8">
    <citation type="journal article" date="2006" name="Am. J. Respir. Crit. Care Med.">
        <title>Uteroglobin-related protein 1 expression suppresses allergic airway inflammation in mice.</title>
        <authorList>
            <person name="Chiba Y."/>
            <person name="Kurotani R."/>
            <person name="Kusakabe T."/>
            <person name="Miura T."/>
            <person name="Link B.W."/>
            <person name="Misawa M."/>
            <person name="Kimura S."/>
        </authorList>
    </citation>
    <scope>FUNCTION</scope>
</reference>
<reference key="9">
    <citation type="journal article" date="2008" name="Am. J. Respir. Crit. Care Med.">
        <title>Role of secretoglobin 3A2 in lung development.</title>
        <authorList>
            <person name="Kurotani R."/>
            <person name="Tomita T."/>
            <person name="Yang Q."/>
            <person name="Carlson B.A."/>
            <person name="Chen C."/>
            <person name="Kimura S."/>
        </authorList>
    </citation>
    <scope>FUNCTION</scope>
    <scope>DEVELOPMENTAL STAGE</scope>
</reference>
<reference key="10">
    <citation type="journal article" date="2014" name="Am. J. Physiol.">
        <title>Preclinical evaluation of human secretoglobin 3A2 in mouse models of lung development and fibrosis.</title>
        <authorList>
            <person name="Cai Y."/>
            <person name="Winn M.E."/>
            <person name="Zehmer J.K."/>
            <person name="Gillette W.K."/>
            <person name="Lubkowski J.T."/>
            <person name="Pilon A.L."/>
            <person name="Kimura S."/>
        </authorList>
    </citation>
    <scope>FUNCTION</scope>
    <scope>SUBUNIT</scope>
    <scope>MUTAGENESIS OF CYS-68</scope>
</reference>
<reference key="11">
    <citation type="journal article" date="2014" name="Cell Tissue Res.">
        <title>Regulation of LH/FSH expression by secretoglobin 3A2 in the mouse pituitary gland.</title>
        <authorList>
            <person name="Miyano Y."/>
            <person name="Tahara S."/>
            <person name="Sakata I."/>
            <person name="Sakai T."/>
            <person name="Abe H."/>
            <person name="Kimura S."/>
            <person name="Kurotani R."/>
        </authorList>
    </citation>
    <scope>FUNCTION</scope>
    <scope>TISSUE SPECIFICITY</scope>
    <scope>DEVELOPMENTAL STAGE</scope>
</reference>
<reference key="12">
    <citation type="journal article" date="2014" name="Mediators Inflamm.">
        <title>Secretoglobin superfamily protein SCGB3A2 deficiency potentiates ovalbumin-induced allergic pulmonary inflammation.</title>
        <authorList>
            <person name="Kido T."/>
            <person name="Yoneda M."/>
            <person name="Cai Y."/>
            <person name="Matsubara T."/>
            <person name="Ward J.M."/>
            <person name="Kimura S."/>
        </authorList>
    </citation>
    <scope>FUNCTION</scope>
    <scope>TISSUE SPECIFICITY</scope>
    <scope>DISRUPTION PHENOTYPE</scope>
</reference>
<reference key="13">
    <citation type="journal article" date="2015" name="PLoS ONE">
        <title>Secretoglobin 3A2 exhibits anti-fibrotic activity in bleomycin-induced pulmonary fibrosis model mice.</title>
        <authorList>
            <person name="Cai Y."/>
            <person name="Kimura S."/>
        </authorList>
    </citation>
    <scope>FUNCTION</scope>
    <scope>DISRUPTION PHENOTYPE</scope>
</reference>
<evidence type="ECO:0000250" key="1">
    <source>
        <dbReference type="UniProtKB" id="Q96PL1"/>
    </source>
</evidence>
<evidence type="ECO:0000269" key="2">
    <source>
    </source>
</evidence>
<evidence type="ECO:0000269" key="3">
    <source>
    </source>
</evidence>
<evidence type="ECO:0000269" key="4">
    <source>
    </source>
</evidence>
<evidence type="ECO:0000269" key="5">
    <source>
    </source>
</evidence>
<evidence type="ECO:0000269" key="6">
    <source>
    </source>
</evidence>
<evidence type="ECO:0000269" key="7">
    <source>
    </source>
</evidence>
<evidence type="ECO:0000269" key="8">
    <source>
    </source>
</evidence>
<evidence type="ECO:0000269" key="9">
    <source>
    </source>
</evidence>
<evidence type="ECO:0000269" key="10">
    <source>
    </source>
</evidence>
<evidence type="ECO:0000303" key="11">
    <source>
    </source>
</evidence>
<evidence type="ECO:0000305" key="12"/>
<evidence type="ECO:0000305" key="13">
    <source>
    </source>
</evidence>
<evidence type="ECO:0000305" key="14">
    <source>
    </source>
</evidence>
<evidence type="ECO:0000312" key="15">
    <source>
        <dbReference type="EMBL" id="BAE22952.1"/>
    </source>
</evidence>
<feature type="signal peptide" evidence="1">
    <location>
        <begin position="1"/>
        <end position="21"/>
    </location>
</feature>
<feature type="chain" id="PRO_0000036382" description="Secretoglobin family 3A member 2">
    <location>
        <begin position="22"/>
        <end position="91"/>
    </location>
</feature>
<feature type="disulfide bond" description="Interchain" evidence="14">
    <location>
        <position position="68"/>
    </location>
</feature>
<feature type="splice variant" id="VSP_059182" description="In isoform B." evidence="13">
    <original>L</original>
    <variation>LVIIICSYFPGRSLCYVNNLPSF</variation>
    <location>
        <position position="84"/>
    </location>
</feature>
<feature type="splice variant" id="VSP_059183" description="In isoform C." evidence="13">
    <original>EALSHLV</original>
    <variation>VIIICSYFPGRSLCYVNNLPSFVSVLFLPMICAYPRDSKKQTFAFIERVFEQSKL</variation>
    <location>
        <begin position="85"/>
        <end position="91"/>
    </location>
</feature>
<feature type="mutagenesis site" description="Fails to homodimerize." evidence="7">
    <original>C</original>
    <variation>S</variation>
    <location>
        <position position="68"/>
    </location>
</feature>
<sequence length="91" mass="9819">MKLVSIFLLVTIGICGYSATALLINRLPVVDKLPVPLDDIIPSFDPLKMLLKTLGISVEHLVTGLKKCVDELGPEASEAVKKLLEALSHLV</sequence>
<name>SG3A2_MOUSE</name>
<proteinExistence type="evidence at protein level"/>
<keyword id="KW-0025">Alternative splicing</keyword>
<keyword id="KW-1015">Disulfide bond</keyword>
<keyword id="KW-1185">Reference proteome</keyword>
<keyword id="KW-0964">Secreted</keyword>
<keyword id="KW-0732">Signal</keyword>
<comment type="function">
    <text evidence="1 5 6 7 8 9 10">Secreted cytokine-like protein (By similarity). Binds to the scavenger receptor MARCO (By similarity). Can also bind to pathogens including the Gram-positive bacterium L.monocytogenes, the Gram-negative bacterium P.aeruginosa, and yeast (By similarity). Strongly inhibits phospholipase A2 (PLA2G1B) activity (PubMed:24213919). Seems to have anti-inflammatory effects in respiratory epithelium (PubMed:16456148, PubMed:25242865). Also has anti-fibrotic activity in lung (PubMed:24213919, PubMed:26559674). May play a role in fetal lung development and maturation (PubMed:18535256). Promotes branching morphogenesis during early stages of lung development (PubMed:18535256). In the pituitary, may inhibit production of follicle-stimulating hormone (FSH) and luteinizing hormone (LH) (PubMed:24514953).</text>
</comment>
<comment type="subunit">
    <text evidence="1 2 7">Homodimer; disulfide-linked (PubMed:11682631, PubMed:24213919). Monomer (PubMed:11682631, PubMed:24213919). Interacts with APOA1 (By similarity).</text>
</comment>
<comment type="subcellular location">
    <subcellularLocation>
        <location evidence="2">Secreted</location>
    </subcellularLocation>
</comment>
<comment type="alternative products">
    <event type="alternative splicing"/>
    <isoform>
        <id>Q920H1-2</id>
        <name evidence="11">A</name>
        <sequence type="displayed"/>
    </isoform>
    <isoform>
        <id>Q920H1-3</id>
        <name evidence="11">B</name>
        <sequence type="described" ref="VSP_059182"/>
    </isoform>
    <isoform>
        <id>Q920H1-1</id>
        <name evidence="11">C</name>
        <sequence type="described" ref="VSP_059183"/>
    </isoform>
</comment>
<comment type="tissue specificity">
    <text evidence="2 3 4 8 9">Highly expressed in lung where it localizes to epithelial cells of the trachea, bronchus and bronchioles (at protein level) (PubMed:11682631, PubMed:12175512, PubMed:12406855, PubMed:25242865). Expressed in club cells of the bronchioles (PubMed:12406855). Also detected in the anterior and posterior lobes of the pituitary gland where it may localize to gonadotropic cells (at protein level) (PubMed:24514953). Not detected in other tissues tested (PubMed:11682631, PubMed:12175512).</text>
</comment>
<comment type="developmental stage">
    <text evidence="2 3 4 6 8">Detected in the pituitary gland from postnatal day 1 onwards (at protein level) (PubMed:24514953). Weakly expressed in embryonic lung at stages 11.5 dpc and 12.5 dpc (PubMed:11682631, PubMed:18535256). Seems to localize most strongly to the growing tips of bronchi at stage 13.5 dpc (PubMed:18535256). Highly expressed in developing lung at stages 16.5 dpc and 18.5 dpc, where it localizes to airway epithelia (PubMed:11682631, PubMed:12175512, PubMed:12406855, PubMed:24514953). During gestation, detected in the mammary gland at 6.5 days post coitum (dpc), but expression declines at 8.5 dpc and is absent at later stages (PubMed:12175512).</text>
</comment>
<comment type="disruption phenotype">
    <text evidence="9 10">Viable and fertile, with no gross abnormalities. Lung tissue appears normal (PubMed:25242865). In a C57BL/6NCr strain background, animals show a mild increase in ovalbumin-induced inflammatory response in lung (PubMed:25242865). However, in a mixed genetic background, there is a reduced ovalbumin-induced inflammatory response, possibly due to the presence of modifier genes (PubMed:25242865). Animals have a more severe response to bleomycin-induced pulmonary fibrosis characterized by increased weight loss, more extensive fibrosis in lung tissue, increased expression of collagen genes, higher numbers of lymphocyte, monocyte and neutrophil cells in bronchoalveolar lavage fluid, and increased cytokine levels (PubMed:26559674).</text>
</comment>
<comment type="miscellaneous">
    <molecule>Isoform A</molecule>
    <text evidence="2">Major isoform.</text>
</comment>
<comment type="similarity">
    <text evidence="12">Belongs to the secretoglobin family. UGRP subfamily.</text>
</comment>
<accession>Q920H1</accession>
<accession>Q5D060</accession>
<accession>Q920H2</accession>
<accession>Q920H3</accession>
<gene>
    <name type="primary">Scgb3a2</name>
    <name type="synonym">Pnsp1</name>
    <name type="synonym">Ugrp1</name>
</gene>